<proteinExistence type="evidence at transcript level"/>
<sequence>MDEANHSVVSEFVFLGLSDSRKIQLLLFLFFSVFYVSSLMGNLLIVLTVTSDPRLQSPMYFLLANLSIINLVFCSSTAPKMIYDLFRKHKTISFGGCVVQIFFIHAVGGTEMVLLIAMAFDRYVAICKPLHYLTIMNPQRCILFLVISWIIGIIHSVIQLAFVVDLLFCGPNELDSFFCDLPRFIKLACIETYTLGFMVTANSGFISLASFLILIISYIFILVTVQKKSSGGIFKAFSMLSAHVIVVVLVFGPLIFFYIFPFPTSHLDKFLAIFDAVITPVLNPVIYTFRNKEMMVAMRRRCSQFVNYSKIF</sequence>
<dbReference type="EMBL" id="AB065899">
    <property type="protein sequence ID" value="BAC06115.1"/>
    <property type="molecule type" value="Genomic_DNA"/>
</dbReference>
<dbReference type="EMBL" id="CH471101">
    <property type="protein sequence ID" value="EAX02319.1"/>
    <property type="molecule type" value="Genomic_DNA"/>
</dbReference>
<dbReference type="EMBL" id="BC137002">
    <property type="protein sequence ID" value="AAI37003.1"/>
    <property type="molecule type" value="mRNA"/>
</dbReference>
<dbReference type="EMBL" id="BC137003">
    <property type="protein sequence ID" value="AAI37004.1"/>
    <property type="molecule type" value="mRNA"/>
</dbReference>
<dbReference type="EMBL" id="BK004367">
    <property type="protein sequence ID" value="DAA04765.1"/>
    <property type="molecule type" value="Genomic_DNA"/>
</dbReference>
<dbReference type="CCDS" id="CCDS32341.1"/>
<dbReference type="RefSeq" id="NP_001005326.1">
    <property type="nucleotide sequence ID" value="NM_001005326.2"/>
</dbReference>
<dbReference type="SMR" id="Q8NGB9"/>
<dbReference type="FunCoup" id="Q8NGB9">
    <property type="interactions" value="416"/>
</dbReference>
<dbReference type="STRING" id="9606.ENSP00000327525"/>
<dbReference type="GlyCosmos" id="Q8NGB9">
    <property type="glycosylation" value="1 site, No reported glycans"/>
</dbReference>
<dbReference type="GlyGen" id="Q8NGB9">
    <property type="glycosylation" value="1 site"/>
</dbReference>
<dbReference type="iPTMnet" id="Q8NGB9"/>
<dbReference type="BioMuta" id="OR4F6"/>
<dbReference type="DMDM" id="38372660"/>
<dbReference type="PaxDb" id="9606-ENSP00000327525"/>
<dbReference type="Antibodypedia" id="56268">
    <property type="antibodies" value="43 antibodies from 16 providers"/>
</dbReference>
<dbReference type="DNASU" id="390648"/>
<dbReference type="Ensembl" id="ENST00000328882.6">
    <property type="protein sequence ID" value="ENSP00000327525.4"/>
    <property type="gene ID" value="ENSG00000184140.6"/>
</dbReference>
<dbReference type="GeneID" id="390648"/>
<dbReference type="KEGG" id="hsa:390648"/>
<dbReference type="MANE-Select" id="ENST00000328882.6">
    <property type="protein sequence ID" value="ENSP00000327525.4"/>
    <property type="RefSeq nucleotide sequence ID" value="NM_001005326.2"/>
    <property type="RefSeq protein sequence ID" value="NP_001005326.1"/>
</dbReference>
<dbReference type="UCSC" id="uc010utr.3">
    <property type="organism name" value="human"/>
</dbReference>
<dbReference type="AGR" id="HGNC:15372"/>
<dbReference type="CTD" id="390648"/>
<dbReference type="DisGeNET" id="390648"/>
<dbReference type="GeneCards" id="OR4F6"/>
<dbReference type="HGNC" id="HGNC:15372">
    <property type="gene designation" value="OR4F6"/>
</dbReference>
<dbReference type="HPA" id="ENSG00000184140">
    <property type="expression patterns" value="Not detected"/>
</dbReference>
<dbReference type="neXtProt" id="NX_Q8NGB9"/>
<dbReference type="PharmGKB" id="PA32292"/>
<dbReference type="VEuPathDB" id="HostDB:ENSG00000184140"/>
<dbReference type="eggNOG" id="ENOG502T9N1">
    <property type="taxonomic scope" value="Eukaryota"/>
</dbReference>
<dbReference type="GeneTree" id="ENSGT00940000163199"/>
<dbReference type="HOGENOM" id="CLU_012526_8_2_1"/>
<dbReference type="InParanoid" id="Q8NGB9"/>
<dbReference type="OMA" id="CTQFVNY"/>
<dbReference type="OrthoDB" id="5969463at2759"/>
<dbReference type="PAN-GO" id="Q8NGB9">
    <property type="GO annotations" value="2 GO annotations based on evolutionary models"/>
</dbReference>
<dbReference type="PhylomeDB" id="Q8NGB9"/>
<dbReference type="TreeFam" id="TF336512"/>
<dbReference type="PathwayCommons" id="Q8NGB9"/>
<dbReference type="Reactome" id="R-HSA-9752946">
    <property type="pathway name" value="Expression and translocation of olfactory receptors"/>
</dbReference>
<dbReference type="BioGRID-ORCS" id="390648">
    <property type="hits" value="13 hits in 750 CRISPR screens"/>
</dbReference>
<dbReference type="GeneWiki" id="OR4F6"/>
<dbReference type="GenomeRNAi" id="390648"/>
<dbReference type="Pharos" id="Q8NGB9">
    <property type="development level" value="Tdark"/>
</dbReference>
<dbReference type="PRO" id="PR:Q8NGB9"/>
<dbReference type="Proteomes" id="UP000005640">
    <property type="component" value="Chromosome 15"/>
</dbReference>
<dbReference type="RNAct" id="Q8NGB9">
    <property type="molecule type" value="protein"/>
</dbReference>
<dbReference type="ExpressionAtlas" id="Q8NGB9">
    <property type="expression patterns" value="baseline and differential"/>
</dbReference>
<dbReference type="GO" id="GO:0005886">
    <property type="term" value="C:plasma membrane"/>
    <property type="evidence" value="ECO:0007669"/>
    <property type="project" value="UniProtKB-SubCell"/>
</dbReference>
<dbReference type="GO" id="GO:0004930">
    <property type="term" value="F:G protein-coupled receptor activity"/>
    <property type="evidence" value="ECO:0007669"/>
    <property type="project" value="UniProtKB-KW"/>
</dbReference>
<dbReference type="GO" id="GO:0004984">
    <property type="term" value="F:olfactory receptor activity"/>
    <property type="evidence" value="ECO:0000318"/>
    <property type="project" value="GO_Central"/>
</dbReference>
<dbReference type="CDD" id="cd15226">
    <property type="entry name" value="7tmA_OR4-like"/>
    <property type="match status" value="1"/>
</dbReference>
<dbReference type="FunFam" id="1.20.1070.10:FF:000012">
    <property type="entry name" value="Olfactory receptor"/>
    <property type="match status" value="1"/>
</dbReference>
<dbReference type="Gene3D" id="1.20.1070.10">
    <property type="entry name" value="Rhodopsin 7-helix transmembrane proteins"/>
    <property type="match status" value="1"/>
</dbReference>
<dbReference type="InterPro" id="IPR000276">
    <property type="entry name" value="GPCR_Rhodpsn"/>
</dbReference>
<dbReference type="InterPro" id="IPR017452">
    <property type="entry name" value="GPCR_Rhodpsn_7TM"/>
</dbReference>
<dbReference type="InterPro" id="IPR000725">
    <property type="entry name" value="Olfact_rcpt"/>
</dbReference>
<dbReference type="InterPro" id="IPR050427">
    <property type="entry name" value="Olfactory_Receptors"/>
</dbReference>
<dbReference type="PANTHER" id="PTHR48002">
    <property type="entry name" value="OLFACTORY RECEPTOR"/>
    <property type="match status" value="1"/>
</dbReference>
<dbReference type="Pfam" id="PF13853">
    <property type="entry name" value="7tm_4"/>
    <property type="match status" value="1"/>
</dbReference>
<dbReference type="PRINTS" id="PR00237">
    <property type="entry name" value="GPCRRHODOPSN"/>
</dbReference>
<dbReference type="PRINTS" id="PR00245">
    <property type="entry name" value="OLFACTORYR"/>
</dbReference>
<dbReference type="SUPFAM" id="SSF81321">
    <property type="entry name" value="Family A G protein-coupled receptor-like"/>
    <property type="match status" value="1"/>
</dbReference>
<dbReference type="PROSITE" id="PS00237">
    <property type="entry name" value="G_PROTEIN_RECEP_F1_1"/>
    <property type="match status" value="1"/>
</dbReference>
<dbReference type="PROSITE" id="PS50262">
    <property type="entry name" value="G_PROTEIN_RECEP_F1_2"/>
    <property type="match status" value="1"/>
</dbReference>
<keyword id="KW-1003">Cell membrane</keyword>
<keyword id="KW-1015">Disulfide bond</keyword>
<keyword id="KW-0297">G-protein coupled receptor</keyword>
<keyword id="KW-0325">Glycoprotein</keyword>
<keyword id="KW-0472">Membrane</keyword>
<keyword id="KW-0552">Olfaction</keyword>
<keyword id="KW-0675">Receptor</keyword>
<keyword id="KW-1185">Reference proteome</keyword>
<keyword id="KW-0716">Sensory transduction</keyword>
<keyword id="KW-0807">Transducer</keyword>
<keyword id="KW-0812">Transmembrane</keyword>
<keyword id="KW-1133">Transmembrane helix</keyword>
<gene>
    <name type="primary">OR4F6</name>
    <name type="synonym">OR4F12</name>
</gene>
<evidence type="ECO:0000255" key="1"/>
<evidence type="ECO:0000255" key="2">
    <source>
        <dbReference type="PROSITE-ProRule" id="PRU00521"/>
    </source>
</evidence>
<evidence type="ECO:0000305" key="3"/>
<feature type="chain" id="PRO_0000150548" description="Olfactory receptor 4F6">
    <location>
        <begin position="1"/>
        <end position="312"/>
    </location>
</feature>
<feature type="topological domain" description="Extracellular" evidence="1">
    <location>
        <begin position="1"/>
        <end position="25"/>
    </location>
</feature>
<feature type="transmembrane region" description="Helical; Name=1" evidence="1">
    <location>
        <begin position="26"/>
        <end position="49"/>
    </location>
</feature>
<feature type="topological domain" description="Cytoplasmic" evidence="1">
    <location>
        <begin position="50"/>
        <end position="57"/>
    </location>
</feature>
<feature type="transmembrane region" description="Helical; Name=2" evidence="1">
    <location>
        <begin position="58"/>
        <end position="79"/>
    </location>
</feature>
<feature type="topological domain" description="Extracellular" evidence="1">
    <location>
        <begin position="80"/>
        <end position="100"/>
    </location>
</feature>
<feature type="transmembrane region" description="Helical; Name=3" evidence="1">
    <location>
        <begin position="101"/>
        <end position="120"/>
    </location>
</feature>
<feature type="topological domain" description="Cytoplasmic" evidence="1">
    <location>
        <begin position="121"/>
        <end position="139"/>
    </location>
</feature>
<feature type="transmembrane region" description="Helical; Name=4" evidence="1">
    <location>
        <begin position="140"/>
        <end position="158"/>
    </location>
</feature>
<feature type="topological domain" description="Extracellular" evidence="1">
    <location>
        <begin position="159"/>
        <end position="195"/>
    </location>
</feature>
<feature type="transmembrane region" description="Helical; Name=5" evidence="1">
    <location>
        <begin position="196"/>
        <end position="219"/>
    </location>
</feature>
<feature type="topological domain" description="Cytoplasmic" evidence="1">
    <location>
        <begin position="220"/>
        <end position="235"/>
    </location>
</feature>
<feature type="transmembrane region" description="Helical; Name=6" evidence="1">
    <location>
        <begin position="236"/>
        <end position="258"/>
    </location>
</feature>
<feature type="topological domain" description="Extracellular" evidence="1">
    <location>
        <begin position="259"/>
        <end position="269"/>
    </location>
</feature>
<feature type="transmembrane region" description="Helical; Name=7" evidence="1">
    <location>
        <begin position="270"/>
        <end position="289"/>
    </location>
</feature>
<feature type="topological domain" description="Cytoplasmic" evidence="1">
    <location>
        <begin position="290"/>
        <end position="312"/>
    </location>
</feature>
<feature type="glycosylation site" description="N-linked (GlcNAc...) asparagine" evidence="1">
    <location>
        <position position="5"/>
    </location>
</feature>
<feature type="disulfide bond" evidence="2">
    <location>
        <begin position="97"/>
        <end position="189"/>
    </location>
</feature>
<name>OR4F6_HUMAN</name>
<comment type="function">
    <text evidence="3">Odorant receptor.</text>
</comment>
<comment type="subcellular location">
    <subcellularLocation>
        <location>Cell membrane</location>
        <topology>Multi-pass membrane protein</topology>
    </subcellularLocation>
</comment>
<comment type="similarity">
    <text evidence="2">Belongs to the G-protein coupled receptor 1 family.</text>
</comment>
<comment type="online information" name="Human Olfactory Receptor Data Exploratorium (HORDE)">
    <link uri="http://genome.weizmann.ac.il/horde/card/index/symbol:OR4F6"/>
</comment>
<protein>
    <recommendedName>
        <fullName>Olfactory receptor 4F6</fullName>
    </recommendedName>
    <alternativeName>
        <fullName>Olfactory receptor 4F12</fullName>
    </alternativeName>
    <alternativeName>
        <fullName>Olfactory receptor OR15-15</fullName>
    </alternativeName>
</protein>
<organism>
    <name type="scientific">Homo sapiens</name>
    <name type="common">Human</name>
    <dbReference type="NCBI Taxonomy" id="9606"/>
    <lineage>
        <taxon>Eukaryota</taxon>
        <taxon>Metazoa</taxon>
        <taxon>Chordata</taxon>
        <taxon>Craniata</taxon>
        <taxon>Vertebrata</taxon>
        <taxon>Euteleostomi</taxon>
        <taxon>Mammalia</taxon>
        <taxon>Eutheria</taxon>
        <taxon>Euarchontoglires</taxon>
        <taxon>Primates</taxon>
        <taxon>Haplorrhini</taxon>
        <taxon>Catarrhini</taxon>
        <taxon>Hominidae</taxon>
        <taxon>Homo</taxon>
    </lineage>
</organism>
<reference key="1">
    <citation type="submission" date="2001-07" db="EMBL/GenBank/DDBJ databases">
        <title>Genome-wide discovery and analysis of human seven transmembrane helix receptor genes.</title>
        <authorList>
            <person name="Suwa M."/>
            <person name="Sato T."/>
            <person name="Okouchi I."/>
            <person name="Arita M."/>
            <person name="Futami K."/>
            <person name="Matsumoto S."/>
            <person name="Tsutsumi S."/>
            <person name="Aburatani H."/>
            <person name="Asai K."/>
            <person name="Akiyama Y."/>
        </authorList>
    </citation>
    <scope>NUCLEOTIDE SEQUENCE [GENOMIC DNA]</scope>
</reference>
<reference key="2">
    <citation type="submission" date="2005-07" db="EMBL/GenBank/DDBJ databases">
        <authorList>
            <person name="Mural R.J."/>
            <person name="Istrail S."/>
            <person name="Sutton G.G."/>
            <person name="Florea L."/>
            <person name="Halpern A.L."/>
            <person name="Mobarry C.M."/>
            <person name="Lippert R."/>
            <person name="Walenz B."/>
            <person name="Shatkay H."/>
            <person name="Dew I."/>
            <person name="Miller J.R."/>
            <person name="Flanigan M.J."/>
            <person name="Edwards N.J."/>
            <person name="Bolanos R."/>
            <person name="Fasulo D."/>
            <person name="Halldorsson B.V."/>
            <person name="Hannenhalli S."/>
            <person name="Turner R."/>
            <person name="Yooseph S."/>
            <person name="Lu F."/>
            <person name="Nusskern D.R."/>
            <person name="Shue B.C."/>
            <person name="Zheng X.H."/>
            <person name="Zhong F."/>
            <person name="Delcher A.L."/>
            <person name="Huson D.H."/>
            <person name="Kravitz S.A."/>
            <person name="Mouchard L."/>
            <person name="Reinert K."/>
            <person name="Remington K.A."/>
            <person name="Clark A.G."/>
            <person name="Waterman M.S."/>
            <person name="Eichler E.E."/>
            <person name="Adams M.D."/>
            <person name="Hunkapiller M.W."/>
            <person name="Myers E.W."/>
            <person name="Venter J.C."/>
        </authorList>
    </citation>
    <scope>NUCLEOTIDE SEQUENCE [LARGE SCALE GENOMIC DNA]</scope>
</reference>
<reference key="3">
    <citation type="journal article" date="2004" name="Genome Res.">
        <title>The status, quality, and expansion of the NIH full-length cDNA project: the Mammalian Gene Collection (MGC).</title>
        <authorList>
            <consortium name="The MGC Project Team"/>
        </authorList>
    </citation>
    <scope>NUCLEOTIDE SEQUENCE [LARGE SCALE MRNA]</scope>
    <source>
        <tissue>Testis</tissue>
    </source>
</reference>
<reference key="4">
    <citation type="journal article" date="2004" name="Proc. Natl. Acad. Sci. U.S.A.">
        <title>The human olfactory receptor gene family.</title>
        <authorList>
            <person name="Malnic B."/>
            <person name="Godfrey P.A."/>
            <person name="Buck L.B."/>
        </authorList>
    </citation>
    <scope>IDENTIFICATION</scope>
</reference>
<reference key="5">
    <citation type="journal article" date="2004" name="Proc. Natl. Acad. Sci. U.S.A.">
        <authorList>
            <person name="Malnic B."/>
            <person name="Godfrey P.A."/>
            <person name="Buck L.B."/>
        </authorList>
    </citation>
    <scope>ERRATUM OF PUBMED:14983052</scope>
</reference>
<accession>Q8NGB9</accession>
<accession>B9EH28</accession>
<accession>Q6IF95</accession>